<keyword id="KW-0067">ATP-binding</keyword>
<keyword id="KW-0963">Cytoplasm</keyword>
<keyword id="KW-0391">Immunity</keyword>
<keyword id="KW-0399">Innate immunity</keyword>
<keyword id="KW-1017">Isopeptide bond</keyword>
<keyword id="KW-0418">Kinase</keyword>
<keyword id="KW-0551">Lipid droplet</keyword>
<keyword id="KW-0460">Magnesium</keyword>
<keyword id="KW-0547">Nucleotide-binding</keyword>
<keyword id="KW-0539">Nucleus</keyword>
<keyword id="KW-0597">Phosphoprotein</keyword>
<keyword id="KW-1185">Reference proteome</keyword>
<keyword id="KW-0723">Serine/threonine-protein kinase</keyword>
<keyword id="KW-0808">Transferase</keyword>
<keyword id="KW-0832">Ubl conjugation</keyword>
<name>IRAK1_BOVIN</name>
<proteinExistence type="evidence at transcript level"/>
<reference key="1">
    <citation type="journal article" date="2006" name="Vet. Immunol. Immunopathol.">
        <title>Cloning and radiation hybrid mapping of bovine toll-like receptor-4 (TLR-4) signaling molecules.</title>
        <authorList>
            <person name="Connor E.E."/>
            <person name="Cates E.A."/>
            <person name="Williams J.L."/>
            <person name="Bannerman D.D."/>
        </authorList>
    </citation>
    <scope>NUCLEOTIDE SEQUENCE [MRNA]</scope>
    <source>
        <tissue>Mammary gland</tissue>
    </source>
</reference>
<dbReference type="EC" id="2.7.11.1"/>
<dbReference type="EMBL" id="DQ319075">
    <property type="protein sequence ID" value="ABC47878.2"/>
    <property type="molecule type" value="mRNA"/>
</dbReference>
<dbReference type="RefSeq" id="NP_001035645.1">
    <property type="nucleotide sequence ID" value="NM_001040555.1"/>
</dbReference>
<dbReference type="SMR" id="Q2LGB3"/>
<dbReference type="FunCoup" id="Q2LGB3">
    <property type="interactions" value="1277"/>
</dbReference>
<dbReference type="STRING" id="9913.ENSBTAP00000021407"/>
<dbReference type="PaxDb" id="9913-ENSBTAP00000021407"/>
<dbReference type="GeneID" id="533953"/>
<dbReference type="KEGG" id="bta:533953"/>
<dbReference type="CTD" id="3654"/>
<dbReference type="VEuPathDB" id="HostDB:ENSBTAG00000016085"/>
<dbReference type="eggNOG" id="KOG1187">
    <property type="taxonomic scope" value="Eukaryota"/>
</dbReference>
<dbReference type="HOGENOM" id="CLU_000288_173_1_1"/>
<dbReference type="InParanoid" id="Q2LGB3"/>
<dbReference type="OMA" id="MTQVYES"/>
<dbReference type="OrthoDB" id="4062651at2759"/>
<dbReference type="Reactome" id="R-BTA-1257604">
    <property type="pathway name" value="PIP3 activates AKT signaling"/>
</dbReference>
<dbReference type="Reactome" id="R-BTA-209543">
    <property type="pathway name" value="p75NTR recruits signalling complexes"/>
</dbReference>
<dbReference type="Reactome" id="R-BTA-209560">
    <property type="pathway name" value="NF-kB is activated and signals survival"/>
</dbReference>
<dbReference type="Reactome" id="R-BTA-450302">
    <property type="pathway name" value="activated TAK1 mediates p38 MAPK activation"/>
</dbReference>
<dbReference type="Reactome" id="R-BTA-450321">
    <property type="pathway name" value="JNK (c-Jun kinases) phosphorylation and activation mediated by activated human TAK1"/>
</dbReference>
<dbReference type="Reactome" id="R-BTA-6811558">
    <property type="pathway name" value="PI5P, PP2A and IER3 Regulate PI3K/AKT Signaling"/>
</dbReference>
<dbReference type="Reactome" id="R-BTA-9020702">
    <property type="pathway name" value="Interleukin-1 signaling"/>
</dbReference>
<dbReference type="Reactome" id="R-BTA-937039">
    <property type="pathway name" value="IRAK1 recruits IKK complex"/>
</dbReference>
<dbReference type="Reactome" id="R-BTA-975144">
    <property type="pathway name" value="IRAK1 recruits IKK complex upon TLR7/8 or 9 stimulation"/>
</dbReference>
<dbReference type="Proteomes" id="UP000009136">
    <property type="component" value="Chromosome X"/>
</dbReference>
<dbReference type="Bgee" id="ENSBTAG00000016085">
    <property type="expression patterns" value="Expressed in laryngeal cartilage and 104 other cell types or tissues"/>
</dbReference>
<dbReference type="GO" id="GO:0005737">
    <property type="term" value="C:cytoplasm"/>
    <property type="evidence" value="ECO:0000318"/>
    <property type="project" value="GO_Central"/>
</dbReference>
<dbReference type="GO" id="GO:0005811">
    <property type="term" value="C:lipid droplet"/>
    <property type="evidence" value="ECO:0000250"/>
    <property type="project" value="UniProtKB"/>
</dbReference>
<dbReference type="GO" id="GO:0005634">
    <property type="term" value="C:nucleus"/>
    <property type="evidence" value="ECO:0000318"/>
    <property type="project" value="GO_Central"/>
</dbReference>
<dbReference type="GO" id="GO:0005886">
    <property type="term" value="C:plasma membrane"/>
    <property type="evidence" value="ECO:0000318"/>
    <property type="project" value="GO_Central"/>
</dbReference>
<dbReference type="GO" id="GO:0005524">
    <property type="term" value="F:ATP binding"/>
    <property type="evidence" value="ECO:0007669"/>
    <property type="project" value="UniProtKB-KW"/>
</dbReference>
<dbReference type="GO" id="GO:0106310">
    <property type="term" value="F:protein serine kinase activity"/>
    <property type="evidence" value="ECO:0007669"/>
    <property type="project" value="RHEA"/>
</dbReference>
<dbReference type="GO" id="GO:0004674">
    <property type="term" value="F:protein serine/threonine kinase activity"/>
    <property type="evidence" value="ECO:0007669"/>
    <property type="project" value="UniProtKB-KW"/>
</dbReference>
<dbReference type="GO" id="GO:0045087">
    <property type="term" value="P:innate immune response"/>
    <property type="evidence" value="ECO:0000318"/>
    <property type="project" value="GO_Central"/>
</dbReference>
<dbReference type="GO" id="GO:0070498">
    <property type="term" value="P:interleukin-1-mediated signaling pathway"/>
    <property type="evidence" value="ECO:0000318"/>
    <property type="project" value="GO_Central"/>
</dbReference>
<dbReference type="GO" id="GO:0035556">
    <property type="term" value="P:intracellular signal transduction"/>
    <property type="evidence" value="ECO:0000318"/>
    <property type="project" value="GO_Central"/>
</dbReference>
<dbReference type="GO" id="GO:0031663">
    <property type="term" value="P:lipopolysaccharide-mediated signaling pathway"/>
    <property type="evidence" value="ECO:0000318"/>
    <property type="project" value="GO_Central"/>
</dbReference>
<dbReference type="GO" id="GO:0043123">
    <property type="term" value="P:positive regulation of canonical NF-kappaB signal transduction"/>
    <property type="evidence" value="ECO:0000318"/>
    <property type="project" value="GO_Central"/>
</dbReference>
<dbReference type="GO" id="GO:0008063">
    <property type="term" value="P:Toll signaling pathway"/>
    <property type="evidence" value="ECO:0000318"/>
    <property type="project" value="GO_Central"/>
</dbReference>
<dbReference type="GO" id="GO:0034134">
    <property type="term" value="P:toll-like receptor 2 signaling pathway"/>
    <property type="evidence" value="ECO:0000318"/>
    <property type="project" value="GO_Central"/>
</dbReference>
<dbReference type="GO" id="GO:0034142">
    <property type="term" value="P:toll-like receptor 4 signaling pathway"/>
    <property type="evidence" value="ECO:0000318"/>
    <property type="project" value="GO_Central"/>
</dbReference>
<dbReference type="CDD" id="cd08794">
    <property type="entry name" value="Death_IRAK1"/>
    <property type="match status" value="1"/>
</dbReference>
<dbReference type="FunFam" id="1.10.533.10:FF:000027">
    <property type="entry name" value="Interleukin-1 receptor-associated kinase 1 (Predicted)"/>
    <property type="match status" value="1"/>
</dbReference>
<dbReference type="FunFam" id="3.30.200.20:FF:000300">
    <property type="entry name" value="Interleukin-1 receptor-associated kinase 1 (Predicted)"/>
    <property type="match status" value="1"/>
</dbReference>
<dbReference type="FunFam" id="1.10.510.10:FF:000424">
    <property type="entry name" value="Putative interleukin-1 receptor-associated kinase 1"/>
    <property type="match status" value="1"/>
</dbReference>
<dbReference type="Gene3D" id="1.10.533.10">
    <property type="entry name" value="Death Domain, Fas"/>
    <property type="match status" value="1"/>
</dbReference>
<dbReference type="Gene3D" id="3.30.200.20">
    <property type="entry name" value="Phosphorylase Kinase, domain 1"/>
    <property type="match status" value="1"/>
</dbReference>
<dbReference type="Gene3D" id="1.10.510.10">
    <property type="entry name" value="Transferase(Phosphotransferase) domain 1"/>
    <property type="match status" value="1"/>
</dbReference>
<dbReference type="InterPro" id="IPR011029">
    <property type="entry name" value="DEATH-like_dom_sf"/>
</dbReference>
<dbReference type="InterPro" id="IPR000488">
    <property type="entry name" value="Death_dom"/>
</dbReference>
<dbReference type="InterPro" id="IPR035533">
    <property type="entry name" value="Death_IRAK1"/>
</dbReference>
<dbReference type="InterPro" id="IPR011009">
    <property type="entry name" value="Kinase-like_dom_sf"/>
</dbReference>
<dbReference type="InterPro" id="IPR000719">
    <property type="entry name" value="Prot_kinase_dom"/>
</dbReference>
<dbReference type="InterPro" id="IPR017441">
    <property type="entry name" value="Protein_kinase_ATP_BS"/>
</dbReference>
<dbReference type="InterPro" id="IPR008271">
    <property type="entry name" value="Ser/Thr_kinase_AS"/>
</dbReference>
<dbReference type="PANTHER" id="PTHR27001:SF939">
    <property type="entry name" value="INTERLEUKIN 1 RECEPTOR ASSOCIATED KINASE 1"/>
    <property type="match status" value="1"/>
</dbReference>
<dbReference type="PANTHER" id="PTHR27001">
    <property type="entry name" value="OS01G0253100 PROTEIN"/>
    <property type="match status" value="1"/>
</dbReference>
<dbReference type="Pfam" id="PF00531">
    <property type="entry name" value="Death"/>
    <property type="match status" value="1"/>
</dbReference>
<dbReference type="Pfam" id="PF00069">
    <property type="entry name" value="Pkinase"/>
    <property type="match status" value="1"/>
</dbReference>
<dbReference type="SMART" id="SM00220">
    <property type="entry name" value="S_TKc"/>
    <property type="match status" value="1"/>
</dbReference>
<dbReference type="SUPFAM" id="SSF47986">
    <property type="entry name" value="DEATH domain"/>
    <property type="match status" value="1"/>
</dbReference>
<dbReference type="SUPFAM" id="SSF56112">
    <property type="entry name" value="Protein kinase-like (PK-like)"/>
    <property type="match status" value="1"/>
</dbReference>
<dbReference type="PROSITE" id="PS00107">
    <property type="entry name" value="PROTEIN_KINASE_ATP"/>
    <property type="match status" value="1"/>
</dbReference>
<dbReference type="PROSITE" id="PS50011">
    <property type="entry name" value="PROTEIN_KINASE_DOM"/>
    <property type="match status" value="1"/>
</dbReference>
<dbReference type="PROSITE" id="PS00108">
    <property type="entry name" value="PROTEIN_KINASE_ST"/>
    <property type="match status" value="1"/>
</dbReference>
<sequence>MAGGPGPGDPAVPGAQHFLYEVPPWVMCRFYKVMDALEPADWCQFAALIVRDQTELRLCERSGQRTASVLWPWINRNARVADLVRILTHLQLLRARDIITAWHPPAPLLPPSTTSLTPSSISAPSEAAVPGHRKLPSLASTFLSPAFPGSQTHSDPELCPGPSPAAHQPPLPSPAPSSTKPSPESPMSLLPGAPSSSFCWPLHEICQGTHDFSEELKIGEGGFGCVYRAVMRNTVYAVKRLKEEADLEWTTVKQSFQTEVQQLSRFRHPNIVDFAGYCAQSGFYCLVYGFLPNGSLEDRLHVQTQAWPPLSWPQRLDILLGTARAIQFLHQDSPSLIHGDVKSSNVLLDERLMPKLGDFGLARLSRFTGANPGQSSSVARTRTVRGTLAYLPEEYVKTGRLAVDTDTFSFGVVLLETLAGQRAVRMHGAQPKYLKDLVEEEAEEAGVTLKGTQTAVQGGPAADTWAALVAAQIYKKHLDPRPGPCPPQLGLALGQLACCCLHRRAKRRPPMTQVYQTLEELQVVVAGPCLELEAASRSPPSPQENSYVSTSGSALSRASPWQPLAAPLGAQAQATDWPQKGANQPVESDESVSDLSAALHSWHLSPSCPAGPGAPSWVPAPFGQAACTQGGAARESSCGSGPGLQPTAVEGPLLGSSMSSRPPQIVINPARRKMLQKLALYEDGVLDSLQLLSSSSLPDSGQDLQDRQGPEERDEFRS</sequence>
<evidence type="ECO:0000250" key="1"/>
<evidence type="ECO:0000250" key="2">
    <source>
        <dbReference type="UniProtKB" id="P51617"/>
    </source>
</evidence>
<evidence type="ECO:0000250" key="3">
    <source>
        <dbReference type="UniProtKB" id="Q62406"/>
    </source>
</evidence>
<evidence type="ECO:0000255" key="4">
    <source>
        <dbReference type="PROSITE-ProRule" id="PRU00159"/>
    </source>
</evidence>
<evidence type="ECO:0000255" key="5">
    <source>
        <dbReference type="PROSITE-ProRule" id="PRU10027"/>
    </source>
</evidence>
<evidence type="ECO:0000256" key="6">
    <source>
        <dbReference type="SAM" id="MobiDB-lite"/>
    </source>
</evidence>
<evidence type="ECO:0000305" key="7"/>
<organism>
    <name type="scientific">Bos taurus</name>
    <name type="common">Bovine</name>
    <dbReference type="NCBI Taxonomy" id="9913"/>
    <lineage>
        <taxon>Eukaryota</taxon>
        <taxon>Metazoa</taxon>
        <taxon>Chordata</taxon>
        <taxon>Craniata</taxon>
        <taxon>Vertebrata</taxon>
        <taxon>Euteleostomi</taxon>
        <taxon>Mammalia</taxon>
        <taxon>Eutheria</taxon>
        <taxon>Laurasiatheria</taxon>
        <taxon>Artiodactyla</taxon>
        <taxon>Ruminantia</taxon>
        <taxon>Pecora</taxon>
        <taxon>Bovidae</taxon>
        <taxon>Bovinae</taxon>
        <taxon>Bos</taxon>
    </lineage>
</organism>
<feature type="chain" id="PRO_0000269708" description="Interleukin-1 receptor-associated kinase 1">
    <location>
        <begin position="1"/>
        <end position="718"/>
    </location>
</feature>
<feature type="domain" description="Death">
    <location>
        <begin position="27"/>
        <end position="106"/>
    </location>
</feature>
<feature type="domain" description="Protein kinase" evidence="4">
    <location>
        <begin position="212"/>
        <end position="521"/>
    </location>
</feature>
<feature type="region of interest" description="ProST region" evidence="1">
    <location>
        <begin position="110"/>
        <end position="211"/>
    </location>
</feature>
<feature type="region of interest" description="Disordered" evidence="6">
    <location>
        <begin position="146"/>
        <end position="188"/>
    </location>
</feature>
<feature type="region of interest" description="Disordered" evidence="6">
    <location>
        <begin position="534"/>
        <end position="554"/>
    </location>
</feature>
<feature type="region of interest" description="Disordered" evidence="6">
    <location>
        <begin position="569"/>
        <end position="594"/>
    </location>
</feature>
<feature type="region of interest" description="Disordered" evidence="6">
    <location>
        <begin position="631"/>
        <end position="662"/>
    </location>
</feature>
<feature type="region of interest" description="Disordered" evidence="6">
    <location>
        <begin position="692"/>
        <end position="718"/>
    </location>
</feature>
<feature type="compositionally biased region" description="Pro residues" evidence="6">
    <location>
        <begin position="159"/>
        <end position="175"/>
    </location>
</feature>
<feature type="compositionally biased region" description="Low complexity" evidence="6">
    <location>
        <begin position="176"/>
        <end position="188"/>
    </location>
</feature>
<feature type="compositionally biased region" description="Polar residues" evidence="6">
    <location>
        <begin position="543"/>
        <end position="554"/>
    </location>
</feature>
<feature type="compositionally biased region" description="Low complexity" evidence="6">
    <location>
        <begin position="692"/>
        <end position="703"/>
    </location>
</feature>
<feature type="compositionally biased region" description="Basic and acidic residues" evidence="6">
    <location>
        <begin position="704"/>
        <end position="718"/>
    </location>
</feature>
<feature type="active site" description="Proton acceptor" evidence="4 5">
    <location>
        <position position="340"/>
    </location>
</feature>
<feature type="binding site" evidence="4">
    <location>
        <begin position="218"/>
        <end position="226"/>
    </location>
    <ligand>
        <name>ATP</name>
        <dbReference type="ChEBI" id="CHEBI:30616"/>
    </ligand>
</feature>
<feature type="binding site" evidence="4">
    <location>
        <position position="239"/>
    </location>
    <ligand>
        <name>ATP</name>
        <dbReference type="ChEBI" id="CHEBI:30616"/>
    </ligand>
</feature>
<feature type="binding site" evidence="4">
    <location>
        <begin position="342"/>
        <end position="345"/>
    </location>
    <ligand>
        <name>ATP</name>
        <dbReference type="ChEBI" id="CHEBI:30616"/>
    </ligand>
</feature>
<feature type="binding site" evidence="4">
    <location>
        <position position="358"/>
    </location>
    <ligand>
        <name>ATP</name>
        <dbReference type="ChEBI" id="CHEBI:30616"/>
    </ligand>
</feature>
<feature type="modified residue" description="Phosphothreonine; by PKC/PRKCI" evidence="2">
    <location>
        <position position="66"/>
    </location>
</feature>
<feature type="modified residue" description="Phosphothreonine; by IRAK4" evidence="2">
    <location>
        <position position="209"/>
    </location>
</feature>
<feature type="modified residue" description="Phosphoserine" evidence="2">
    <location>
        <position position="375"/>
    </location>
</feature>
<feature type="modified residue" description="Phosphothreonine" evidence="2">
    <location>
        <position position="387"/>
    </location>
</feature>
<feature type="modified residue" description="Phosphoserine" evidence="2">
    <location>
        <position position="556"/>
    </location>
</feature>
<feature type="cross-link" description="Glycyl lysine isopeptide (Lys-Gly) (interchain with G-Cter in ubiquitin)" evidence="2">
    <location>
        <position position="134"/>
    </location>
</feature>
<feature type="cross-link" description="Glycyl lysine isopeptide (Lys-Gly) (interchain with G-Cter in ubiquitin)" evidence="2">
    <location>
        <position position="180"/>
    </location>
</feature>
<accession>Q2LGB3</accession>
<comment type="function">
    <text evidence="1">Serine/threonine-protein kinase that plays a critical role in initiating innate immune response against foreign pathogens. Involved in Toll-like receptor (TLR) and IL-1R signaling pathways. Is rapidly recruited by MYD88 to the receptor-signaling complex upon TLR activation. Association with MYD88 leads to IRAK1 phosphorylation by IRAK4 and subsequent autophosphorylation and kinase activation. Phosphorylates E3 ubiquitin ligases Pellino proteins (PELI1, PELI2 and PELI3) to promote pellino-mediated polyubiquitination of IRAK1. Then, the ubiquitin-binding domain of IKBKG/NEMO binds to polyubiquitinated IRAK1 bringing together the IRAK1-MAP3K7/TAK1-TRAF6 complex and the NEMO-IKKA-IKKB complex. In turn, MAP3K7/TAK1 activates IKKs (CHUK/IKKA and IKBKB/IKKB) leading to NF-kappa-B nuclear translocation and activation. Alternatively, phosphorylates TIRAP to promote its ubiquitination and subsequent degradation. Phosphorylates the interferon regulatory factor 7 (IRF7) to induce its activation and translocation to the nucleus, resulting in transcriptional activation of type I IFN genes, which drive the cell in an antiviral state. When sumoylated, translocates to the nucleus and phosphorylates STAT3 (By similarity).</text>
</comment>
<comment type="catalytic activity">
    <reaction>
        <text>L-seryl-[protein] + ATP = O-phospho-L-seryl-[protein] + ADP + H(+)</text>
        <dbReference type="Rhea" id="RHEA:17989"/>
        <dbReference type="Rhea" id="RHEA-COMP:9863"/>
        <dbReference type="Rhea" id="RHEA-COMP:11604"/>
        <dbReference type="ChEBI" id="CHEBI:15378"/>
        <dbReference type="ChEBI" id="CHEBI:29999"/>
        <dbReference type="ChEBI" id="CHEBI:30616"/>
        <dbReference type="ChEBI" id="CHEBI:83421"/>
        <dbReference type="ChEBI" id="CHEBI:456216"/>
        <dbReference type="EC" id="2.7.11.1"/>
    </reaction>
</comment>
<comment type="catalytic activity">
    <reaction>
        <text>L-threonyl-[protein] + ATP = O-phospho-L-threonyl-[protein] + ADP + H(+)</text>
        <dbReference type="Rhea" id="RHEA:46608"/>
        <dbReference type="Rhea" id="RHEA-COMP:11060"/>
        <dbReference type="Rhea" id="RHEA-COMP:11605"/>
        <dbReference type="ChEBI" id="CHEBI:15378"/>
        <dbReference type="ChEBI" id="CHEBI:30013"/>
        <dbReference type="ChEBI" id="CHEBI:30616"/>
        <dbReference type="ChEBI" id="CHEBI:61977"/>
        <dbReference type="ChEBI" id="CHEBI:456216"/>
        <dbReference type="EC" id="2.7.11.1"/>
    </reaction>
</comment>
<comment type="cofactor">
    <cofactor evidence="1">
        <name>Mg(2+)</name>
        <dbReference type="ChEBI" id="CHEBI:18420"/>
    </cofactor>
</comment>
<comment type="subunit">
    <text evidence="2 3">Homodimer (By similarity). Forms a complex with TRAF6, PELI1, IRAK4 and MYD88 (By similarity). Direct binding of SMAD6 to PELI1 prevents complex formation and hence negatively regulates IL1R-TLR signaling and eventually NF-kappa-B-mediated gene expression (By similarity). The TRAF6-PELI1-IRAK1-IRAK4-MYD88 complex recruits MAP3K7/TAK1, TAB1 and TAB2 to mediate NF-kappa-B activation (By similarity). Interaction with MYD88 recruits IRAK1 to the stimulated receptor complex (By similarity). Interacts with TOLLIP; this interaction occurs in the cytosol prior to receptor activation (By similarity). Interacts with IL1RL1 (By similarity). Interacts (when polyubiquitinated) with IKBKG/NEMO (By similarity). Interacts with RSAD2/viperin (By similarity). Interacts with IRAK1BP1 (By similarity). Interacts with PELI2 (By similarity). Interacts with ZC3H12A; this interaction increases the interaction between ZC3H12A and IKBKB/IKKB (By similarity). Interacts with IRAK4 (By similarity). Interacts with PELI3 (By similarity). Interacts with PELI1 and TRAF6 (By similarity). Interacts with INAVA; the interaction takes place upon PRR stimulation (By similarity). Interacts (via C-terminus) with NFATC4 (via N-terminus) (By similarity).</text>
</comment>
<comment type="subcellular location">
    <subcellularLocation>
        <location evidence="1">Cytoplasm</location>
    </subcellularLocation>
    <subcellularLocation>
        <location evidence="1">Nucleus</location>
    </subcellularLocation>
    <subcellularLocation>
        <location evidence="1">Lipid droplet</location>
    </subcellularLocation>
    <text evidence="1">Translocates to the nucleus when sumoylated. RSAD2/viperin recruits it to the lipid droplet (By similarity).</text>
</comment>
<comment type="domain">
    <text evidence="1">The ProST region is composed of many proline and serine residues (more than 20 of each) and some threonines. This region is the site of IRAK-1 hyperphosphorylation (By similarity).</text>
</comment>
<comment type="PTM">
    <text evidence="1">Following recruitment on the activated receptor complex, phosphorylated on Thr-209, probably by IRAK4, resulting in a conformational change of the kinase domain, allowing further phosphorylations to take place. Thr-387 phosphorylation in the activation loop is required to achieve full enzymatic activity (By similarity).</text>
</comment>
<comment type="PTM">
    <text evidence="1">Polyubiquitinated by TRAF6 after cell stimulation with IL-1-beta by PELI1, PELI2 and PELI3. Polyubiquitination occurs with polyubiquitin chains linked through 'Lys-63'. Ubiquitination promotes interaction with NEMO/IKBKG. Also sumoylated; leading to nuclear translocation (By similarity).</text>
</comment>
<comment type="similarity">
    <text evidence="7">Belongs to the protein kinase superfamily. TKL Ser/Thr protein kinase family. Pelle subfamily.</text>
</comment>
<protein>
    <recommendedName>
        <fullName>Interleukin-1 receptor-associated kinase 1</fullName>
        <shortName>IRAK-1</shortName>
        <ecNumber>2.7.11.1</ecNumber>
    </recommendedName>
</protein>
<gene>
    <name type="primary">IRAK1</name>
</gene>